<feature type="chain" id="PRO_5000257090" description="Multidrug resistance efflux pump SepA">
    <location>
        <begin position="1"/>
        <end position="155"/>
    </location>
</feature>
<feature type="transmembrane region" description="Helical" evidence="2">
    <location>
        <begin position="18"/>
        <end position="38"/>
    </location>
</feature>
<feature type="transmembrane region" description="Helical" evidence="2">
    <location>
        <begin position="63"/>
        <end position="83"/>
    </location>
</feature>
<feature type="transmembrane region" description="Helical" evidence="2">
    <location>
        <begin position="100"/>
        <end position="120"/>
    </location>
</feature>
<feature type="transmembrane region" description="Helical" evidence="2">
    <location>
        <begin position="122"/>
        <end position="142"/>
    </location>
</feature>
<name>MDEP_STAA2</name>
<comment type="function">
    <text evidence="1">Involved in multidrug efflux.</text>
</comment>
<comment type="subcellular location">
    <subcellularLocation>
        <location evidence="3">Cell membrane</location>
        <topology evidence="3">Multi-pass membrane protein</topology>
    </subcellularLocation>
</comment>
<comment type="similarity">
    <text evidence="3">Belongs to the multidrug resistance efflux pump SepA family.</text>
</comment>
<comment type="sequence caution" evidence="3">
    <conflict type="erroneous initiation">
        <sequence resource="EMBL-CDS" id="ABR53065"/>
    </conflict>
</comment>
<evidence type="ECO:0000250" key="1"/>
<evidence type="ECO:0000255" key="2"/>
<evidence type="ECO:0000305" key="3"/>
<gene>
    <name type="primary">sepA</name>
    <name type="ordered locus">SaurJH1_2237</name>
</gene>
<protein>
    <recommendedName>
        <fullName>Multidrug resistance efflux pump SepA</fullName>
    </recommendedName>
    <alternativeName>
        <fullName>Antiseptic resistance protein SepA</fullName>
    </alternativeName>
    <alternativeName>
        <fullName>Staphylococcal efflux pump A</fullName>
    </alternativeName>
</protein>
<sequence>MIVNYLKHKFYNLLTTMIVLFIFVLSGAIFLTFLGFGLYGLSRILIYFRLGDFTYNRSMYDNLLYYGSYIIFGYFIIFAVEHLMDYFRKMLPENAYFRGATFHLISYTVATTLFYFIIHLNYVYINIDFWVIMVIIGFLYVCKLQFYPESKNLNNRK</sequence>
<organism>
    <name type="scientific">Staphylococcus aureus (strain JH1)</name>
    <dbReference type="NCBI Taxonomy" id="359787"/>
    <lineage>
        <taxon>Bacteria</taxon>
        <taxon>Bacillati</taxon>
        <taxon>Bacillota</taxon>
        <taxon>Bacilli</taxon>
        <taxon>Bacillales</taxon>
        <taxon>Staphylococcaceae</taxon>
        <taxon>Staphylococcus</taxon>
    </lineage>
</organism>
<reference key="1">
    <citation type="submission" date="2007-06" db="EMBL/GenBank/DDBJ databases">
        <title>Complete sequence of chromosome of Staphylococcus aureus subsp. aureus JH1.</title>
        <authorList>
            <consortium name="US DOE Joint Genome Institute"/>
            <person name="Copeland A."/>
            <person name="Lucas S."/>
            <person name="Lapidus A."/>
            <person name="Barry K."/>
            <person name="Detter J.C."/>
            <person name="Glavina del Rio T."/>
            <person name="Hammon N."/>
            <person name="Israni S."/>
            <person name="Dalin E."/>
            <person name="Tice H."/>
            <person name="Pitluck S."/>
            <person name="Chain P."/>
            <person name="Malfatti S."/>
            <person name="Shin M."/>
            <person name="Vergez L."/>
            <person name="Schmutz J."/>
            <person name="Larimer F."/>
            <person name="Land M."/>
            <person name="Hauser L."/>
            <person name="Kyrpides N."/>
            <person name="Ivanova N."/>
            <person name="Tomasz A."/>
            <person name="Richardson P."/>
        </authorList>
    </citation>
    <scope>NUCLEOTIDE SEQUENCE [LARGE SCALE GENOMIC DNA]</scope>
    <source>
        <strain>JH1</strain>
    </source>
</reference>
<proteinExistence type="inferred from homology"/>
<dbReference type="EMBL" id="CP000736">
    <property type="protein sequence ID" value="ABR53065.1"/>
    <property type="status" value="ALT_INIT"/>
    <property type="molecule type" value="Genomic_DNA"/>
</dbReference>
<dbReference type="KEGG" id="sah:SaurJH1_2237"/>
<dbReference type="HOGENOM" id="CLU_151983_0_0_9"/>
<dbReference type="GO" id="GO:0005886">
    <property type="term" value="C:plasma membrane"/>
    <property type="evidence" value="ECO:0007669"/>
    <property type="project" value="UniProtKB-SubCell"/>
</dbReference>
<dbReference type="InterPro" id="IPR031396">
    <property type="entry name" value="SepA"/>
</dbReference>
<dbReference type="Pfam" id="PF17080">
    <property type="entry name" value="SepA"/>
    <property type="match status" value="1"/>
</dbReference>
<keyword id="KW-1003">Cell membrane</keyword>
<keyword id="KW-0472">Membrane</keyword>
<keyword id="KW-0812">Transmembrane</keyword>
<keyword id="KW-1133">Transmembrane helix</keyword>
<keyword id="KW-0813">Transport</keyword>
<accession>A6U3P7</accession>